<dbReference type="EC" id="1.97.1.12" evidence="1"/>
<dbReference type="EMBL" id="AJ271079">
    <property type="protein sequence ID" value="CAB67137.2"/>
    <property type="molecule type" value="Genomic_DNA"/>
</dbReference>
<dbReference type="RefSeq" id="NP_084672.2">
    <property type="nucleotide sequence ID" value="NC_002693.2"/>
</dbReference>
<dbReference type="SMR" id="Q9MTN8"/>
<dbReference type="GeneID" id="802788"/>
<dbReference type="GO" id="GO:0009535">
    <property type="term" value="C:chloroplast thylakoid membrane"/>
    <property type="evidence" value="ECO:0007669"/>
    <property type="project" value="UniProtKB-SubCell"/>
</dbReference>
<dbReference type="GO" id="GO:0009522">
    <property type="term" value="C:photosystem I"/>
    <property type="evidence" value="ECO:0007669"/>
    <property type="project" value="UniProtKB-KW"/>
</dbReference>
<dbReference type="GO" id="GO:0051539">
    <property type="term" value="F:4 iron, 4 sulfur cluster binding"/>
    <property type="evidence" value="ECO:0007669"/>
    <property type="project" value="UniProtKB-KW"/>
</dbReference>
<dbReference type="GO" id="GO:0016168">
    <property type="term" value="F:chlorophyll binding"/>
    <property type="evidence" value="ECO:0007669"/>
    <property type="project" value="UniProtKB-KW"/>
</dbReference>
<dbReference type="GO" id="GO:0009055">
    <property type="term" value="F:electron transfer activity"/>
    <property type="evidence" value="ECO:0007669"/>
    <property type="project" value="UniProtKB-UniRule"/>
</dbReference>
<dbReference type="GO" id="GO:0000287">
    <property type="term" value="F:magnesium ion binding"/>
    <property type="evidence" value="ECO:0007669"/>
    <property type="project" value="UniProtKB-UniRule"/>
</dbReference>
<dbReference type="GO" id="GO:0016491">
    <property type="term" value="F:oxidoreductase activity"/>
    <property type="evidence" value="ECO:0007669"/>
    <property type="project" value="UniProtKB-KW"/>
</dbReference>
<dbReference type="GO" id="GO:0015979">
    <property type="term" value="P:photosynthesis"/>
    <property type="evidence" value="ECO:0007669"/>
    <property type="project" value="UniProtKB-UniRule"/>
</dbReference>
<dbReference type="FunFam" id="1.20.1130.10:FF:000001">
    <property type="entry name" value="Photosystem I P700 chlorophyll a apoprotein A2"/>
    <property type="match status" value="1"/>
</dbReference>
<dbReference type="Gene3D" id="1.20.1130.10">
    <property type="entry name" value="Photosystem I PsaA/PsaB"/>
    <property type="match status" value="1"/>
</dbReference>
<dbReference type="HAMAP" id="MF_00458">
    <property type="entry name" value="PSI_PsaA"/>
    <property type="match status" value="1"/>
</dbReference>
<dbReference type="InterPro" id="IPR006243">
    <property type="entry name" value="PSI_PsaA"/>
</dbReference>
<dbReference type="InterPro" id="IPR001280">
    <property type="entry name" value="PSI_PsaA/B"/>
</dbReference>
<dbReference type="InterPro" id="IPR020586">
    <property type="entry name" value="PSI_PsaA/B_CS"/>
</dbReference>
<dbReference type="InterPro" id="IPR036408">
    <property type="entry name" value="PSI_PsaA/B_sf"/>
</dbReference>
<dbReference type="NCBIfam" id="TIGR01335">
    <property type="entry name" value="psaA"/>
    <property type="match status" value="1"/>
</dbReference>
<dbReference type="PANTHER" id="PTHR30128">
    <property type="entry name" value="OUTER MEMBRANE PROTEIN, OMPA-RELATED"/>
    <property type="match status" value="1"/>
</dbReference>
<dbReference type="PANTHER" id="PTHR30128:SF19">
    <property type="entry name" value="PHOTOSYSTEM I P700 CHLOROPHYLL A APOPROTEIN A1-RELATED"/>
    <property type="match status" value="1"/>
</dbReference>
<dbReference type="Pfam" id="PF00223">
    <property type="entry name" value="PsaA_PsaB"/>
    <property type="match status" value="1"/>
</dbReference>
<dbReference type="PIRSF" id="PIRSF002905">
    <property type="entry name" value="PSI_A"/>
    <property type="match status" value="1"/>
</dbReference>
<dbReference type="PRINTS" id="PR00257">
    <property type="entry name" value="PHOTSYSPSAAB"/>
</dbReference>
<dbReference type="SUPFAM" id="SSF81558">
    <property type="entry name" value="Photosystem I subunits PsaA/PsaB"/>
    <property type="match status" value="1"/>
</dbReference>
<dbReference type="PROSITE" id="PS00419">
    <property type="entry name" value="PHOTOSYSTEM_I_PSAAB"/>
    <property type="match status" value="1"/>
</dbReference>
<name>PSAA_OENEH</name>
<proteinExistence type="inferred from homology"/>
<comment type="function">
    <text>PsaA and PsaB bind P700, the primary electron donor of photosystem I (PSI), as well as the electron acceptors A0, A1 and FX. PSI is a plastocyanin-ferredoxin oxidoreductase, converting photonic excitation into a charge separation, which transfers an electron from the donor P700 chlorophyll pair to the spectroscopically characterized acceptors A0, A1, FX, FA and FB in turn. Oxidized P700 is reduced on the lumenal side of the thylakoid membrane by plastocyanin.</text>
</comment>
<comment type="catalytic activity">
    <reaction evidence="1">
        <text>reduced [plastocyanin] + hnu + oxidized [2Fe-2S]-[ferredoxin] = oxidized [plastocyanin] + reduced [2Fe-2S]-[ferredoxin]</text>
        <dbReference type="Rhea" id="RHEA:30407"/>
        <dbReference type="Rhea" id="RHEA-COMP:10000"/>
        <dbReference type="Rhea" id="RHEA-COMP:10001"/>
        <dbReference type="Rhea" id="RHEA-COMP:10039"/>
        <dbReference type="Rhea" id="RHEA-COMP:10040"/>
        <dbReference type="ChEBI" id="CHEBI:29036"/>
        <dbReference type="ChEBI" id="CHEBI:30212"/>
        <dbReference type="ChEBI" id="CHEBI:33737"/>
        <dbReference type="ChEBI" id="CHEBI:33738"/>
        <dbReference type="ChEBI" id="CHEBI:49552"/>
        <dbReference type="EC" id="1.97.1.12"/>
    </reaction>
</comment>
<comment type="cofactor">
    <text evidence="1">P700 is a chlorophyll a/chlorophyll a' dimer, A0 is one or more chlorophyll a, A1 is one or both phylloquinones and FX is a shared 4Fe-4S iron-sulfur center.</text>
</comment>
<comment type="subunit">
    <text evidence="1">The PsaA/B heterodimer binds the P700 chlorophyll special pair and subsequent electron acceptors. PSI consists of a core antenna complex that captures photons, and an electron transfer chain that converts photonic excitation into a charge separation. The eukaryotic PSI reaction center is composed of at least 11 subunits.</text>
</comment>
<comment type="subcellular location">
    <subcellularLocation>
        <location evidence="1">Plastid</location>
        <location evidence="1">Chloroplast thylakoid membrane</location>
        <topology evidence="1">Multi-pass membrane protein</topology>
    </subcellularLocation>
</comment>
<comment type="similarity">
    <text evidence="1">Belongs to the PsaA/PsaB family.</text>
</comment>
<evidence type="ECO:0000255" key="1">
    <source>
        <dbReference type="HAMAP-Rule" id="MF_00458"/>
    </source>
</evidence>
<reference key="1">
    <citation type="journal article" date="2000" name="Mol. Gen. Genet.">
        <title>Complete nucleotide sequence of the Oenothera elata plastid chromosome, representing plastome I of the five distinguishable Euoenothera plastomes.</title>
        <authorList>
            <person name="Hupfer H."/>
            <person name="Swiatek M."/>
            <person name="Hornung S."/>
            <person name="Herrmann R.G."/>
            <person name="Maier R.M."/>
            <person name="Chiu W.-L."/>
            <person name="Sears B."/>
        </authorList>
    </citation>
    <scope>NUCLEOTIDE SEQUENCE [LARGE SCALE GENOMIC DNA]</scope>
    <source>
        <strain>cv. Johansen</strain>
    </source>
</reference>
<reference key="2">
    <citation type="journal article" date="2008" name="Nucleic Acids Res.">
        <title>The complete nucleotide sequences of the five genetically distinct plastid genomes of Oenothera, subsection Oenothera: I. Sequence evaluation and plastome evolution.</title>
        <authorList>
            <person name="Greiner S."/>
            <person name="Wang X."/>
            <person name="Rauwolf U."/>
            <person name="Silber M.V."/>
            <person name="Mayer K."/>
            <person name="Meurer J."/>
            <person name="Haberer G."/>
            <person name="Herrmann R.G."/>
        </authorList>
    </citation>
    <scope>SEQUENCE REVISION TO 63-65; 71; 80; 90-94; 165; 192; 237 AND 687</scope>
</reference>
<keyword id="KW-0004">4Fe-4S</keyword>
<keyword id="KW-0148">Chlorophyll</keyword>
<keyword id="KW-0150">Chloroplast</keyword>
<keyword id="KW-0157">Chromophore</keyword>
<keyword id="KW-0249">Electron transport</keyword>
<keyword id="KW-0408">Iron</keyword>
<keyword id="KW-0411">Iron-sulfur</keyword>
<keyword id="KW-0460">Magnesium</keyword>
<keyword id="KW-0472">Membrane</keyword>
<keyword id="KW-0479">Metal-binding</keyword>
<keyword id="KW-0560">Oxidoreductase</keyword>
<keyword id="KW-0602">Photosynthesis</keyword>
<keyword id="KW-0603">Photosystem I</keyword>
<keyword id="KW-0934">Plastid</keyword>
<keyword id="KW-0793">Thylakoid</keyword>
<keyword id="KW-0812">Transmembrane</keyword>
<keyword id="KW-1133">Transmembrane helix</keyword>
<keyword id="KW-0813">Transport</keyword>
<accession>Q9MTN8</accession>
<sequence>MIIRSPEPEVKILVDRDPIKTSFEEWAKPGHFSRTIAKGPETTTWIWNLHADAHDFDSHTSDLEEISRKVFSAHFGQLSIIFLWLSGMYFHGARFSNYEAWLSDPTHIGPSAQVVWPIVGQEILNGDVGGGFRGIQITSGFFQLWRASGITSELQLYCTAIGALVFAALMLFAGWFHYHKAAPKLAWFQDVESMLNHHLAGLLGLGSLSWAGHQVHVSLPINQFLNAGVDPKEIPLPHEFILNRDLLAQLYPSFAEGATPFFTLNWSKYAEFLTFRGGLDPVTGGLWLTDIAHHHLAIAILFLIAGHMYRTNWGIGHGLKDILEAHKGPFTGQGHKGLYEILTTSWHAQLSLNLAMLGSLTIVVAHHMYSMPPYPYLATDYGTQLSLFTHHMWIGGFLIVGAAAHAAIFMVRDYDPTTRYNDLLDRVLRHRDAIISHLNWVCIFLGFHSFGLYIHNDTMSALGRPQDMFSDTAIQLQPVFAQWIQNTHALAPGATAPGATTSTSLAWGGGDLVAVGGKVALLPIPLGTADFLVHHIHAFTIHVTVLILLKGVLFARSSRLIPDKANLGFRFPCDGPGRGGTCQVSAWDHVFLGLFWMYNAISVVIFHFSWKMQSDVWGSISDQGVVTHITGGNFAQSSITINGWLRDFLWAQASQVIQSYGSSLSAYGLFFLGAHFVWAFSLMFLFSGRGYWQELIESIVWAHNKLKVAPATQPRALSIVQGRTVGVTHYLLGGIATTWAFFLARIIAVG</sequence>
<protein>
    <recommendedName>
        <fullName evidence="1">Photosystem I P700 chlorophyll a apoprotein A1</fullName>
        <ecNumber evidence="1">1.97.1.12</ecNumber>
    </recommendedName>
    <alternativeName>
        <fullName evidence="1">PSI-A</fullName>
    </alternativeName>
    <alternativeName>
        <fullName evidence="1">PsaA</fullName>
    </alternativeName>
</protein>
<geneLocation type="chloroplast"/>
<gene>
    <name evidence="1" type="primary">psaA</name>
</gene>
<organism>
    <name type="scientific">Oenothera elata subsp. hookeri</name>
    <name type="common">Hooker's evening primrose</name>
    <name type="synonym">Oenothera hookeri</name>
    <dbReference type="NCBI Taxonomy" id="85636"/>
    <lineage>
        <taxon>Eukaryota</taxon>
        <taxon>Viridiplantae</taxon>
        <taxon>Streptophyta</taxon>
        <taxon>Embryophyta</taxon>
        <taxon>Tracheophyta</taxon>
        <taxon>Spermatophyta</taxon>
        <taxon>Magnoliopsida</taxon>
        <taxon>eudicotyledons</taxon>
        <taxon>Gunneridae</taxon>
        <taxon>Pentapetalae</taxon>
        <taxon>rosids</taxon>
        <taxon>malvids</taxon>
        <taxon>Myrtales</taxon>
        <taxon>Onagraceae</taxon>
        <taxon>Onagroideae</taxon>
        <taxon>Onagreae</taxon>
        <taxon>Oenothera</taxon>
    </lineage>
</organism>
<feature type="chain" id="PRO_0000088564" description="Photosystem I P700 chlorophyll a apoprotein A1">
    <location>
        <begin position="1"/>
        <end position="750"/>
    </location>
</feature>
<feature type="transmembrane region" description="Helical; Name=I" evidence="1">
    <location>
        <begin position="70"/>
        <end position="93"/>
    </location>
</feature>
<feature type="transmembrane region" description="Helical; Name=II" evidence="1">
    <location>
        <begin position="156"/>
        <end position="179"/>
    </location>
</feature>
<feature type="transmembrane region" description="Helical; Name=III" evidence="1">
    <location>
        <begin position="195"/>
        <end position="219"/>
    </location>
</feature>
<feature type="transmembrane region" description="Helical; Name=IV" evidence="1">
    <location>
        <begin position="291"/>
        <end position="309"/>
    </location>
</feature>
<feature type="transmembrane region" description="Helical; Name=V" evidence="1">
    <location>
        <begin position="346"/>
        <end position="369"/>
    </location>
</feature>
<feature type="transmembrane region" description="Helical; Name=VI" evidence="1">
    <location>
        <begin position="385"/>
        <end position="411"/>
    </location>
</feature>
<feature type="transmembrane region" description="Helical; Name=VII" evidence="1">
    <location>
        <begin position="433"/>
        <end position="455"/>
    </location>
</feature>
<feature type="transmembrane region" description="Helical; Name=VIII" evidence="1">
    <location>
        <begin position="531"/>
        <end position="549"/>
    </location>
</feature>
<feature type="transmembrane region" description="Helical; Name=IX" evidence="1">
    <location>
        <begin position="589"/>
        <end position="610"/>
    </location>
</feature>
<feature type="transmembrane region" description="Helical; Name=X" evidence="1">
    <location>
        <begin position="664"/>
        <end position="686"/>
    </location>
</feature>
<feature type="transmembrane region" description="Helical; Name=XI" evidence="1">
    <location>
        <begin position="724"/>
        <end position="744"/>
    </location>
</feature>
<feature type="binding site" evidence="1">
    <location>
        <position position="573"/>
    </location>
    <ligand>
        <name>[4Fe-4S] cluster</name>
        <dbReference type="ChEBI" id="CHEBI:49883"/>
        <note>ligand shared between dimeric partners</note>
    </ligand>
</feature>
<feature type="binding site" evidence="1">
    <location>
        <position position="582"/>
    </location>
    <ligand>
        <name>[4Fe-4S] cluster</name>
        <dbReference type="ChEBI" id="CHEBI:49883"/>
        <note>ligand shared between dimeric partners</note>
    </ligand>
</feature>
<feature type="binding site" description="axial binding residue" evidence="1">
    <location>
        <position position="675"/>
    </location>
    <ligand>
        <name>chlorophyll a'</name>
        <dbReference type="ChEBI" id="CHEBI:189419"/>
        <label>A1</label>
    </ligand>
    <ligandPart>
        <name>Mg</name>
        <dbReference type="ChEBI" id="CHEBI:25107"/>
    </ligandPart>
</feature>
<feature type="binding site" description="axial binding residue" evidence="1">
    <location>
        <position position="683"/>
    </location>
    <ligand>
        <name>chlorophyll a</name>
        <dbReference type="ChEBI" id="CHEBI:58416"/>
        <label>A3</label>
    </ligand>
    <ligandPart>
        <name>Mg</name>
        <dbReference type="ChEBI" id="CHEBI:25107"/>
    </ligandPart>
</feature>
<feature type="binding site" evidence="1">
    <location>
        <position position="691"/>
    </location>
    <ligand>
        <name>chlorophyll a</name>
        <dbReference type="ChEBI" id="CHEBI:58416"/>
        <label>A3</label>
    </ligand>
</feature>
<feature type="binding site" evidence="1">
    <location>
        <position position="692"/>
    </location>
    <ligand>
        <name>phylloquinone</name>
        <dbReference type="ChEBI" id="CHEBI:18067"/>
        <label>A</label>
    </ligand>
</feature>